<accession>B7NDV3</accession>
<feature type="chain" id="PRO_1000122861" description="Sulfurtransferase TusD">
    <location>
        <begin position="1"/>
        <end position="128"/>
    </location>
</feature>
<feature type="active site" description="Cysteine persulfide intermediate" evidence="1">
    <location>
        <position position="78"/>
    </location>
</feature>
<organism>
    <name type="scientific">Escherichia coli O17:K52:H18 (strain UMN026 / ExPEC)</name>
    <dbReference type="NCBI Taxonomy" id="585056"/>
    <lineage>
        <taxon>Bacteria</taxon>
        <taxon>Pseudomonadati</taxon>
        <taxon>Pseudomonadota</taxon>
        <taxon>Gammaproteobacteria</taxon>
        <taxon>Enterobacterales</taxon>
        <taxon>Enterobacteriaceae</taxon>
        <taxon>Escherichia</taxon>
    </lineage>
</organism>
<sequence>MRFAIVVTGPAYGTQQASSAFQFAQALIAEGHELSSVFFYREGVYNANQLTSPASDEFDLVRGWQQLNAQHGVALNICVAAALRRGIVDETEAGRLGLASSNLQSGFTLSGLGALAEASLTCDRVVQF</sequence>
<proteinExistence type="inferred from homology"/>
<comment type="function">
    <text evidence="1">Part of a sulfur-relay system required for 2-thiolation of 5-methylaminomethyl-2-thiouridine (mnm(5)s(2)U) at tRNA wobble positions. Accepts sulfur from TusA and transfers it in turn to TusE.</text>
</comment>
<comment type="subunit">
    <text evidence="1">Heterohexamer, formed by a dimer of trimers. The hexameric TusBCD complex contains 2 copies each of TusB, TusC and TusD. The TusBCD complex interacts with TusE.</text>
</comment>
<comment type="subcellular location">
    <subcellularLocation>
        <location evidence="1">Cytoplasm</location>
    </subcellularLocation>
</comment>
<comment type="similarity">
    <text evidence="1">Belongs to the DsrE/TusD family.</text>
</comment>
<protein>
    <recommendedName>
        <fullName evidence="1">Sulfurtransferase TusD</fullName>
        <ecNumber evidence="1">2.8.1.-</ecNumber>
    </recommendedName>
    <alternativeName>
        <fullName evidence="1">tRNA 2-thiouridine synthesizing protein D</fullName>
    </alternativeName>
</protein>
<keyword id="KW-0963">Cytoplasm</keyword>
<keyword id="KW-0808">Transferase</keyword>
<keyword id="KW-0819">tRNA processing</keyword>
<reference key="1">
    <citation type="journal article" date="2009" name="PLoS Genet.">
        <title>Organised genome dynamics in the Escherichia coli species results in highly diverse adaptive paths.</title>
        <authorList>
            <person name="Touchon M."/>
            <person name="Hoede C."/>
            <person name="Tenaillon O."/>
            <person name="Barbe V."/>
            <person name="Baeriswyl S."/>
            <person name="Bidet P."/>
            <person name="Bingen E."/>
            <person name="Bonacorsi S."/>
            <person name="Bouchier C."/>
            <person name="Bouvet O."/>
            <person name="Calteau A."/>
            <person name="Chiapello H."/>
            <person name="Clermont O."/>
            <person name="Cruveiller S."/>
            <person name="Danchin A."/>
            <person name="Diard M."/>
            <person name="Dossat C."/>
            <person name="Karoui M.E."/>
            <person name="Frapy E."/>
            <person name="Garry L."/>
            <person name="Ghigo J.M."/>
            <person name="Gilles A.M."/>
            <person name="Johnson J."/>
            <person name="Le Bouguenec C."/>
            <person name="Lescat M."/>
            <person name="Mangenot S."/>
            <person name="Martinez-Jehanne V."/>
            <person name="Matic I."/>
            <person name="Nassif X."/>
            <person name="Oztas S."/>
            <person name="Petit M.A."/>
            <person name="Pichon C."/>
            <person name="Rouy Z."/>
            <person name="Ruf C.S."/>
            <person name="Schneider D."/>
            <person name="Tourret J."/>
            <person name="Vacherie B."/>
            <person name="Vallenet D."/>
            <person name="Medigue C."/>
            <person name="Rocha E.P.C."/>
            <person name="Denamur E."/>
        </authorList>
    </citation>
    <scope>NUCLEOTIDE SEQUENCE [LARGE SCALE GENOMIC DNA]</scope>
    <source>
        <strain>UMN026 / ExPEC</strain>
    </source>
</reference>
<dbReference type="EC" id="2.8.1.-" evidence="1"/>
<dbReference type="EMBL" id="CU928163">
    <property type="protein sequence ID" value="CAR14953.1"/>
    <property type="molecule type" value="Genomic_DNA"/>
</dbReference>
<dbReference type="RefSeq" id="WP_001209690.1">
    <property type="nucleotide sequence ID" value="NC_011751.1"/>
</dbReference>
<dbReference type="RefSeq" id="YP_002414458.1">
    <property type="nucleotide sequence ID" value="NC_011751.1"/>
</dbReference>
<dbReference type="SMR" id="B7NDV3"/>
<dbReference type="STRING" id="585056.ECUMN_3805"/>
<dbReference type="KEGG" id="eum:ECUMN_3805"/>
<dbReference type="PATRIC" id="fig|585056.7.peg.3979"/>
<dbReference type="HOGENOM" id="CLU_132095_0_0_6"/>
<dbReference type="Proteomes" id="UP000007097">
    <property type="component" value="Chromosome"/>
</dbReference>
<dbReference type="GO" id="GO:1990228">
    <property type="term" value="C:sulfurtransferase complex"/>
    <property type="evidence" value="ECO:0007669"/>
    <property type="project" value="TreeGrafter"/>
</dbReference>
<dbReference type="GO" id="GO:0097163">
    <property type="term" value="F:sulfur carrier activity"/>
    <property type="evidence" value="ECO:0007669"/>
    <property type="project" value="TreeGrafter"/>
</dbReference>
<dbReference type="GO" id="GO:0016783">
    <property type="term" value="F:sulfurtransferase activity"/>
    <property type="evidence" value="ECO:0007669"/>
    <property type="project" value="UniProtKB-UniRule"/>
</dbReference>
<dbReference type="GO" id="GO:0002143">
    <property type="term" value="P:tRNA wobble position uridine thiolation"/>
    <property type="evidence" value="ECO:0007669"/>
    <property type="project" value="TreeGrafter"/>
</dbReference>
<dbReference type="FunFam" id="3.40.1260.10:FF:000001">
    <property type="entry name" value="Sulfurtransferase TusD"/>
    <property type="match status" value="1"/>
</dbReference>
<dbReference type="Gene3D" id="3.40.1260.10">
    <property type="entry name" value="DsrEFH-like"/>
    <property type="match status" value="1"/>
</dbReference>
<dbReference type="HAMAP" id="MF_00390">
    <property type="entry name" value="Thiourid_synth_D"/>
    <property type="match status" value="1"/>
</dbReference>
<dbReference type="InterPro" id="IPR027396">
    <property type="entry name" value="DsrEFH-like"/>
</dbReference>
<dbReference type="InterPro" id="IPR003787">
    <property type="entry name" value="Sulphur_relay_DsrE/F-like"/>
</dbReference>
<dbReference type="InterPro" id="IPR017463">
    <property type="entry name" value="Sulphur_relay_TusD/DsrE"/>
</dbReference>
<dbReference type="NCBIfam" id="NF001237">
    <property type="entry name" value="PRK00207.1"/>
    <property type="match status" value="1"/>
</dbReference>
<dbReference type="NCBIfam" id="TIGR03012">
    <property type="entry name" value="sulf_tusD_dsrE"/>
    <property type="match status" value="1"/>
</dbReference>
<dbReference type="PANTHER" id="PTHR34874">
    <property type="entry name" value="PROTEIN YCHN"/>
    <property type="match status" value="1"/>
</dbReference>
<dbReference type="PANTHER" id="PTHR34874:SF3">
    <property type="entry name" value="SULFURTRANSFERASE TUSD"/>
    <property type="match status" value="1"/>
</dbReference>
<dbReference type="Pfam" id="PF02635">
    <property type="entry name" value="DsrE"/>
    <property type="match status" value="1"/>
</dbReference>
<dbReference type="SUPFAM" id="SSF75169">
    <property type="entry name" value="DsrEFH-like"/>
    <property type="match status" value="1"/>
</dbReference>
<gene>
    <name evidence="1" type="primary">tusD</name>
    <name type="ordered locus">ECUMN_3805</name>
</gene>
<name>TUSD_ECOLU</name>
<evidence type="ECO:0000255" key="1">
    <source>
        <dbReference type="HAMAP-Rule" id="MF_00390"/>
    </source>
</evidence>